<accession>Q8Y4C1</accession>
<comment type="function">
    <text evidence="1">Produces ATP from ADP in the presence of a proton gradient across the membrane. The catalytic sites are hosted primarily by the beta subunits.</text>
</comment>
<comment type="catalytic activity">
    <reaction evidence="1">
        <text>ATP + H2O + 4 H(+)(in) = ADP + phosphate + 5 H(+)(out)</text>
        <dbReference type="Rhea" id="RHEA:57720"/>
        <dbReference type="ChEBI" id="CHEBI:15377"/>
        <dbReference type="ChEBI" id="CHEBI:15378"/>
        <dbReference type="ChEBI" id="CHEBI:30616"/>
        <dbReference type="ChEBI" id="CHEBI:43474"/>
        <dbReference type="ChEBI" id="CHEBI:456216"/>
        <dbReference type="EC" id="7.1.2.2"/>
    </reaction>
</comment>
<comment type="subunit">
    <text evidence="1">F-type ATPases have 2 components, CF(1) - the catalytic core - and CF(0) - the membrane proton channel. CF(1) has five subunits: alpha(3), beta(3), gamma(1), delta(1), epsilon(1). CF(0) has three main subunits: a(1), b(2) and c(9-12). The alpha and beta chains form an alternating ring which encloses part of the gamma chain. CF(1) is attached to CF(0) by a central stalk formed by the gamma and epsilon chains, while a peripheral stalk is formed by the delta and b chains.</text>
</comment>
<comment type="subcellular location">
    <subcellularLocation>
        <location evidence="1">Cell membrane</location>
        <topology evidence="1">Peripheral membrane protein</topology>
    </subcellularLocation>
</comment>
<comment type="similarity">
    <text evidence="1">Belongs to the ATPase alpha/beta chains family.</text>
</comment>
<feature type="chain" id="PRO_0000254292" description="ATP synthase subunit beta 2">
    <location>
        <begin position="1"/>
        <end position="473"/>
    </location>
</feature>
<feature type="binding site" evidence="1">
    <location>
        <begin position="158"/>
        <end position="165"/>
    </location>
    <ligand>
        <name>ATP</name>
        <dbReference type="ChEBI" id="CHEBI:30616"/>
    </ligand>
</feature>
<dbReference type="EC" id="7.1.2.2" evidence="1"/>
<dbReference type="EMBL" id="AL591983">
    <property type="protein sequence ID" value="CAD00607.1"/>
    <property type="molecule type" value="Genomic_DNA"/>
</dbReference>
<dbReference type="PIR" id="AI1390">
    <property type="entry name" value="AI1390"/>
</dbReference>
<dbReference type="SMR" id="Q8Y4C1"/>
<dbReference type="STRING" id="169963.gene:17595240"/>
<dbReference type="PaxDb" id="169963-lmo2529"/>
<dbReference type="EnsemblBacteria" id="CAD00607">
    <property type="protein sequence ID" value="CAD00607"/>
    <property type="gene ID" value="CAD00607"/>
</dbReference>
<dbReference type="KEGG" id="lmo:lmo2529"/>
<dbReference type="PATRIC" id="fig|169963.11.peg.2590"/>
<dbReference type="eggNOG" id="COG0055">
    <property type="taxonomic scope" value="Bacteria"/>
</dbReference>
<dbReference type="HOGENOM" id="CLU_022398_0_2_9"/>
<dbReference type="OrthoDB" id="9801639at2"/>
<dbReference type="PhylomeDB" id="Q8Y4C1"/>
<dbReference type="BioCyc" id="LMON169963:LMO2529-MONOMER"/>
<dbReference type="Proteomes" id="UP000000817">
    <property type="component" value="Chromosome"/>
</dbReference>
<dbReference type="GO" id="GO:0005886">
    <property type="term" value="C:plasma membrane"/>
    <property type="evidence" value="ECO:0007669"/>
    <property type="project" value="UniProtKB-SubCell"/>
</dbReference>
<dbReference type="GO" id="GO:0045259">
    <property type="term" value="C:proton-transporting ATP synthase complex"/>
    <property type="evidence" value="ECO:0007669"/>
    <property type="project" value="UniProtKB-KW"/>
</dbReference>
<dbReference type="GO" id="GO:0005524">
    <property type="term" value="F:ATP binding"/>
    <property type="evidence" value="ECO:0007669"/>
    <property type="project" value="UniProtKB-UniRule"/>
</dbReference>
<dbReference type="GO" id="GO:0016887">
    <property type="term" value="F:ATP hydrolysis activity"/>
    <property type="evidence" value="ECO:0007669"/>
    <property type="project" value="InterPro"/>
</dbReference>
<dbReference type="GO" id="GO:0046933">
    <property type="term" value="F:proton-transporting ATP synthase activity, rotational mechanism"/>
    <property type="evidence" value="ECO:0007669"/>
    <property type="project" value="UniProtKB-UniRule"/>
</dbReference>
<dbReference type="CDD" id="cd18110">
    <property type="entry name" value="ATP-synt_F1_beta_C"/>
    <property type="match status" value="1"/>
</dbReference>
<dbReference type="CDD" id="cd18115">
    <property type="entry name" value="ATP-synt_F1_beta_N"/>
    <property type="match status" value="1"/>
</dbReference>
<dbReference type="CDD" id="cd01133">
    <property type="entry name" value="F1-ATPase_beta_CD"/>
    <property type="match status" value="1"/>
</dbReference>
<dbReference type="FunFam" id="1.10.1140.10:FF:000001">
    <property type="entry name" value="ATP synthase subunit beta"/>
    <property type="match status" value="1"/>
</dbReference>
<dbReference type="FunFam" id="2.40.10.170:FF:000005">
    <property type="entry name" value="ATP synthase subunit beta"/>
    <property type="match status" value="1"/>
</dbReference>
<dbReference type="FunFam" id="3.40.50.300:FF:000004">
    <property type="entry name" value="ATP synthase subunit beta"/>
    <property type="match status" value="1"/>
</dbReference>
<dbReference type="Gene3D" id="2.40.10.170">
    <property type="match status" value="1"/>
</dbReference>
<dbReference type="Gene3D" id="1.10.1140.10">
    <property type="entry name" value="Bovine Mitochondrial F1-atpase, Atp Synthase Beta Chain, Chain D, domain 3"/>
    <property type="match status" value="1"/>
</dbReference>
<dbReference type="Gene3D" id="3.40.50.300">
    <property type="entry name" value="P-loop containing nucleotide triphosphate hydrolases"/>
    <property type="match status" value="1"/>
</dbReference>
<dbReference type="HAMAP" id="MF_01347">
    <property type="entry name" value="ATP_synth_beta_bact"/>
    <property type="match status" value="1"/>
</dbReference>
<dbReference type="InterPro" id="IPR003593">
    <property type="entry name" value="AAA+_ATPase"/>
</dbReference>
<dbReference type="InterPro" id="IPR055190">
    <property type="entry name" value="ATP-synt_VA_C"/>
</dbReference>
<dbReference type="InterPro" id="IPR005722">
    <property type="entry name" value="ATP_synth_F1_bsu"/>
</dbReference>
<dbReference type="InterPro" id="IPR020003">
    <property type="entry name" value="ATPase_a/bsu_AS"/>
</dbReference>
<dbReference type="InterPro" id="IPR050053">
    <property type="entry name" value="ATPase_alpha/beta_chains"/>
</dbReference>
<dbReference type="InterPro" id="IPR004100">
    <property type="entry name" value="ATPase_F1/V1/A1_a/bsu_N"/>
</dbReference>
<dbReference type="InterPro" id="IPR036121">
    <property type="entry name" value="ATPase_F1/V1/A1_a/bsu_N_sf"/>
</dbReference>
<dbReference type="InterPro" id="IPR000194">
    <property type="entry name" value="ATPase_F1/V1/A1_a/bsu_nucl-bd"/>
</dbReference>
<dbReference type="InterPro" id="IPR024034">
    <property type="entry name" value="ATPase_F1/V1_b/a_C"/>
</dbReference>
<dbReference type="InterPro" id="IPR027417">
    <property type="entry name" value="P-loop_NTPase"/>
</dbReference>
<dbReference type="NCBIfam" id="TIGR01039">
    <property type="entry name" value="atpD"/>
    <property type="match status" value="1"/>
</dbReference>
<dbReference type="PANTHER" id="PTHR15184">
    <property type="entry name" value="ATP SYNTHASE"/>
    <property type="match status" value="1"/>
</dbReference>
<dbReference type="PANTHER" id="PTHR15184:SF71">
    <property type="entry name" value="ATP SYNTHASE SUBUNIT BETA, MITOCHONDRIAL"/>
    <property type="match status" value="1"/>
</dbReference>
<dbReference type="Pfam" id="PF00006">
    <property type="entry name" value="ATP-synt_ab"/>
    <property type="match status" value="1"/>
</dbReference>
<dbReference type="Pfam" id="PF02874">
    <property type="entry name" value="ATP-synt_ab_N"/>
    <property type="match status" value="1"/>
</dbReference>
<dbReference type="Pfam" id="PF22919">
    <property type="entry name" value="ATP-synt_VA_C"/>
    <property type="match status" value="1"/>
</dbReference>
<dbReference type="SMART" id="SM00382">
    <property type="entry name" value="AAA"/>
    <property type="match status" value="1"/>
</dbReference>
<dbReference type="SUPFAM" id="SSF47917">
    <property type="entry name" value="C-terminal domain of alpha and beta subunits of F1 ATP synthase"/>
    <property type="match status" value="1"/>
</dbReference>
<dbReference type="SUPFAM" id="SSF50615">
    <property type="entry name" value="N-terminal domain of alpha and beta subunits of F1 ATP synthase"/>
    <property type="match status" value="1"/>
</dbReference>
<dbReference type="SUPFAM" id="SSF52540">
    <property type="entry name" value="P-loop containing nucleoside triphosphate hydrolases"/>
    <property type="match status" value="1"/>
</dbReference>
<dbReference type="PROSITE" id="PS00152">
    <property type="entry name" value="ATPASE_ALPHA_BETA"/>
    <property type="match status" value="1"/>
</dbReference>
<evidence type="ECO:0000255" key="1">
    <source>
        <dbReference type="HAMAP-Rule" id="MF_01347"/>
    </source>
</evidence>
<name>ATPB2_LISMO</name>
<proteinExistence type="inferred from homology"/>
<organism>
    <name type="scientific">Listeria monocytogenes serovar 1/2a (strain ATCC BAA-679 / EGD-e)</name>
    <dbReference type="NCBI Taxonomy" id="169963"/>
    <lineage>
        <taxon>Bacteria</taxon>
        <taxon>Bacillati</taxon>
        <taxon>Bacillota</taxon>
        <taxon>Bacilli</taxon>
        <taxon>Bacillales</taxon>
        <taxon>Listeriaceae</taxon>
        <taxon>Listeria</taxon>
    </lineage>
</organism>
<gene>
    <name evidence="1" type="primary">atpD2</name>
    <name type="ordered locus">lmo2529</name>
</gene>
<sequence>MSKGQVIQVMGPVVDVKFEGGNLPEIYNALVIEYKSDAEEAPTSQLTLEVAIQLGDDVVRTIAMASTDGVQRGMEVIDTGSPITVPVGTVTLGRVFNVLGNTIDLDEPLPSDIKRNKIHREAPTFDQLATTTEILETGIKVVDLLAPYLKGGKIGLFGGAGVGKTVLIQELIHNIAQEHGGISVFAGVGERTREGNDLYFEMKDSGVIEKTAMVFGQMNEPPGARMRVALTGLTIAEYFRDEEHQDVLLFIDNIFRFTQAGSEVSALLGRMPSAVGYQPTLATEMGQLQERITSTNVGSVTSIQAIYVPADDYTDPAPATTFAHLDATTNLERKLTEQGIYPAVDPLASTSRALSPDIVGEEHYAVATEVQRLLQRYKELQDIIAILGMDELSDEDKQSVSRARRVQFFLSQNFHVAEQFTGQKGSYVPVKETVKGFKDLLAGKYDHIPEDAFRSVGRIEDVLEKAKDMGVEV</sequence>
<reference key="1">
    <citation type="journal article" date="2001" name="Science">
        <title>Comparative genomics of Listeria species.</title>
        <authorList>
            <person name="Glaser P."/>
            <person name="Frangeul L."/>
            <person name="Buchrieser C."/>
            <person name="Rusniok C."/>
            <person name="Amend A."/>
            <person name="Baquero F."/>
            <person name="Berche P."/>
            <person name="Bloecker H."/>
            <person name="Brandt P."/>
            <person name="Chakraborty T."/>
            <person name="Charbit A."/>
            <person name="Chetouani F."/>
            <person name="Couve E."/>
            <person name="de Daruvar A."/>
            <person name="Dehoux P."/>
            <person name="Domann E."/>
            <person name="Dominguez-Bernal G."/>
            <person name="Duchaud E."/>
            <person name="Durant L."/>
            <person name="Dussurget O."/>
            <person name="Entian K.-D."/>
            <person name="Fsihi H."/>
            <person name="Garcia-del Portillo F."/>
            <person name="Garrido P."/>
            <person name="Gautier L."/>
            <person name="Goebel W."/>
            <person name="Gomez-Lopez N."/>
            <person name="Hain T."/>
            <person name="Hauf J."/>
            <person name="Jackson D."/>
            <person name="Jones L.-M."/>
            <person name="Kaerst U."/>
            <person name="Kreft J."/>
            <person name="Kuhn M."/>
            <person name="Kunst F."/>
            <person name="Kurapkat G."/>
            <person name="Madueno E."/>
            <person name="Maitournam A."/>
            <person name="Mata Vicente J."/>
            <person name="Ng E."/>
            <person name="Nedjari H."/>
            <person name="Nordsiek G."/>
            <person name="Novella S."/>
            <person name="de Pablos B."/>
            <person name="Perez-Diaz J.-C."/>
            <person name="Purcell R."/>
            <person name="Remmel B."/>
            <person name="Rose M."/>
            <person name="Schlueter T."/>
            <person name="Simoes N."/>
            <person name="Tierrez A."/>
            <person name="Vazquez-Boland J.-A."/>
            <person name="Voss H."/>
            <person name="Wehland J."/>
            <person name="Cossart P."/>
        </authorList>
    </citation>
    <scope>NUCLEOTIDE SEQUENCE [LARGE SCALE GENOMIC DNA]</scope>
    <source>
        <strain>ATCC BAA-679 / EGD-e</strain>
    </source>
</reference>
<keyword id="KW-0066">ATP synthesis</keyword>
<keyword id="KW-0067">ATP-binding</keyword>
<keyword id="KW-1003">Cell membrane</keyword>
<keyword id="KW-0139">CF(1)</keyword>
<keyword id="KW-0375">Hydrogen ion transport</keyword>
<keyword id="KW-0406">Ion transport</keyword>
<keyword id="KW-0472">Membrane</keyword>
<keyword id="KW-0547">Nucleotide-binding</keyword>
<keyword id="KW-1185">Reference proteome</keyword>
<keyword id="KW-1278">Translocase</keyword>
<keyword id="KW-0813">Transport</keyword>
<protein>
    <recommendedName>
        <fullName evidence="1">ATP synthase subunit beta 2</fullName>
        <ecNumber evidence="1">7.1.2.2</ecNumber>
    </recommendedName>
    <alternativeName>
        <fullName evidence="1">ATP synthase F1 sector subunit beta 2</fullName>
    </alternativeName>
    <alternativeName>
        <fullName evidence="1">F-ATPase subunit beta 2</fullName>
    </alternativeName>
</protein>